<proteinExistence type="inferred from homology"/>
<dbReference type="EC" id="2.3.1.275" evidence="1"/>
<dbReference type="EMBL" id="CP000107">
    <property type="protein sequence ID" value="AAZ68058.1"/>
    <property type="molecule type" value="Genomic_DNA"/>
</dbReference>
<dbReference type="RefSeq" id="WP_011304136.1">
    <property type="nucleotide sequence ID" value="NC_007354.1"/>
</dbReference>
<dbReference type="SMR" id="Q3YT97"/>
<dbReference type="FunCoup" id="Q3YT97">
    <property type="interactions" value="106"/>
</dbReference>
<dbReference type="STRING" id="269484.Ecaj_0007"/>
<dbReference type="KEGG" id="ecn:Ecaj_0007"/>
<dbReference type="eggNOG" id="COG0344">
    <property type="taxonomic scope" value="Bacteria"/>
</dbReference>
<dbReference type="HOGENOM" id="CLU_081254_4_0_5"/>
<dbReference type="InParanoid" id="Q3YT97"/>
<dbReference type="UniPathway" id="UPA00085"/>
<dbReference type="Proteomes" id="UP000000435">
    <property type="component" value="Chromosome"/>
</dbReference>
<dbReference type="GO" id="GO:0005886">
    <property type="term" value="C:plasma membrane"/>
    <property type="evidence" value="ECO:0007669"/>
    <property type="project" value="UniProtKB-SubCell"/>
</dbReference>
<dbReference type="GO" id="GO:0043772">
    <property type="term" value="F:acyl-phosphate glycerol-3-phosphate acyltransferase activity"/>
    <property type="evidence" value="ECO:0007669"/>
    <property type="project" value="UniProtKB-UniRule"/>
</dbReference>
<dbReference type="GO" id="GO:0008654">
    <property type="term" value="P:phospholipid biosynthetic process"/>
    <property type="evidence" value="ECO:0007669"/>
    <property type="project" value="UniProtKB-UniRule"/>
</dbReference>
<dbReference type="HAMAP" id="MF_01043">
    <property type="entry name" value="PlsY"/>
    <property type="match status" value="1"/>
</dbReference>
<dbReference type="InterPro" id="IPR003811">
    <property type="entry name" value="G3P_acylTferase_PlsY"/>
</dbReference>
<dbReference type="NCBIfam" id="TIGR00023">
    <property type="entry name" value="glycerol-3-phosphate 1-O-acyltransferase PlsY"/>
    <property type="match status" value="1"/>
</dbReference>
<dbReference type="PANTHER" id="PTHR30309:SF0">
    <property type="entry name" value="GLYCEROL-3-PHOSPHATE ACYLTRANSFERASE-RELATED"/>
    <property type="match status" value="1"/>
</dbReference>
<dbReference type="PANTHER" id="PTHR30309">
    <property type="entry name" value="INNER MEMBRANE PROTEIN YGIH"/>
    <property type="match status" value="1"/>
</dbReference>
<dbReference type="Pfam" id="PF02660">
    <property type="entry name" value="G3P_acyltransf"/>
    <property type="match status" value="1"/>
</dbReference>
<dbReference type="SMART" id="SM01207">
    <property type="entry name" value="G3P_acyltransf"/>
    <property type="match status" value="1"/>
</dbReference>
<gene>
    <name evidence="1" type="primary">plsY</name>
    <name type="ordered locus">Ecaj_0007</name>
</gene>
<accession>Q3YT97</accession>
<keyword id="KW-0997">Cell inner membrane</keyword>
<keyword id="KW-1003">Cell membrane</keyword>
<keyword id="KW-0444">Lipid biosynthesis</keyword>
<keyword id="KW-0443">Lipid metabolism</keyword>
<keyword id="KW-0472">Membrane</keyword>
<keyword id="KW-0594">Phospholipid biosynthesis</keyword>
<keyword id="KW-1208">Phospholipid metabolism</keyword>
<keyword id="KW-0808">Transferase</keyword>
<keyword id="KW-0812">Transmembrane</keyword>
<keyword id="KW-1133">Transmembrane helix</keyword>
<protein>
    <recommendedName>
        <fullName evidence="1">Glycerol-3-phosphate acyltransferase</fullName>
    </recommendedName>
    <alternativeName>
        <fullName evidence="1">Acyl-PO4 G3P acyltransferase</fullName>
    </alternativeName>
    <alternativeName>
        <fullName evidence="1">Acyl-phosphate--glycerol-3-phosphate acyltransferase</fullName>
    </alternativeName>
    <alternativeName>
        <fullName evidence="1">G3P acyltransferase</fullName>
        <shortName evidence="1">GPAT</shortName>
        <ecNumber evidence="1">2.3.1.275</ecNumber>
    </alternativeName>
    <alternativeName>
        <fullName evidence="1">Lysophosphatidic acid synthase</fullName>
        <shortName evidence="1">LPA synthase</shortName>
    </alternativeName>
</protein>
<sequence>MNIYTSILVLSYLIGSIPFGLILSYIGGLGDIRKIGSGNIGATNVFRKSKKLAVVTLILDSLKGFVSVMLAKNFSSDQTFVFMSALFSIIGHMFPVWLSFKGGKGVATLLGSIMFIEYKFVIYFTIFWIIVFVIFRYSSLSSIISTISIMLLVYTHYSANESITFLVMSLLVIVQHIENIVRIIKGKENKI</sequence>
<evidence type="ECO:0000255" key="1">
    <source>
        <dbReference type="HAMAP-Rule" id="MF_01043"/>
    </source>
</evidence>
<comment type="function">
    <text evidence="1">Catalyzes the transfer of an acyl group from acyl-phosphate (acyl-PO(4)) to glycerol-3-phosphate (G3P) to form lysophosphatidic acid (LPA). This enzyme utilizes acyl-phosphate as fatty acyl donor, but not acyl-CoA or acyl-ACP.</text>
</comment>
<comment type="catalytic activity">
    <reaction evidence="1">
        <text>an acyl phosphate + sn-glycerol 3-phosphate = a 1-acyl-sn-glycero-3-phosphate + phosphate</text>
        <dbReference type="Rhea" id="RHEA:34075"/>
        <dbReference type="ChEBI" id="CHEBI:43474"/>
        <dbReference type="ChEBI" id="CHEBI:57597"/>
        <dbReference type="ChEBI" id="CHEBI:57970"/>
        <dbReference type="ChEBI" id="CHEBI:59918"/>
        <dbReference type="EC" id="2.3.1.275"/>
    </reaction>
</comment>
<comment type="pathway">
    <text evidence="1">Lipid metabolism; phospholipid metabolism.</text>
</comment>
<comment type="subunit">
    <text evidence="1">Probably interacts with PlsX.</text>
</comment>
<comment type="subcellular location">
    <subcellularLocation>
        <location evidence="1">Cell inner membrane</location>
        <topology evidence="1">Multi-pass membrane protein</topology>
    </subcellularLocation>
</comment>
<comment type="similarity">
    <text evidence="1">Belongs to the PlsY family.</text>
</comment>
<name>PLSY_EHRCJ</name>
<organism>
    <name type="scientific">Ehrlichia canis (strain Jake)</name>
    <dbReference type="NCBI Taxonomy" id="269484"/>
    <lineage>
        <taxon>Bacteria</taxon>
        <taxon>Pseudomonadati</taxon>
        <taxon>Pseudomonadota</taxon>
        <taxon>Alphaproteobacteria</taxon>
        <taxon>Rickettsiales</taxon>
        <taxon>Anaplasmataceae</taxon>
        <taxon>Ehrlichia</taxon>
    </lineage>
</organism>
<feature type="chain" id="PRO_0000188363" description="Glycerol-3-phosphate acyltransferase">
    <location>
        <begin position="1"/>
        <end position="191"/>
    </location>
</feature>
<feature type="transmembrane region" description="Helical" evidence="1">
    <location>
        <begin position="7"/>
        <end position="27"/>
    </location>
</feature>
<feature type="transmembrane region" description="Helical" evidence="1">
    <location>
        <begin position="51"/>
        <end position="71"/>
    </location>
</feature>
<feature type="transmembrane region" description="Helical" evidence="1">
    <location>
        <begin position="80"/>
        <end position="100"/>
    </location>
</feature>
<feature type="transmembrane region" description="Helical" evidence="1">
    <location>
        <begin position="115"/>
        <end position="135"/>
    </location>
</feature>
<feature type="transmembrane region" description="Helical" evidence="1">
    <location>
        <begin position="139"/>
        <end position="159"/>
    </location>
</feature>
<feature type="transmembrane region" description="Helical" evidence="1">
    <location>
        <begin position="161"/>
        <end position="181"/>
    </location>
</feature>
<reference key="1">
    <citation type="journal article" date="2006" name="J. Bacteriol.">
        <title>The genome of the obligately intracellular bacterium Ehrlichia canis reveals themes of complex membrane structure and immune evasion strategies.</title>
        <authorList>
            <person name="Mavromatis K."/>
            <person name="Doyle C.K."/>
            <person name="Lykidis A."/>
            <person name="Ivanova N."/>
            <person name="Francino M.P."/>
            <person name="Chain P."/>
            <person name="Shin M."/>
            <person name="Malfatti S."/>
            <person name="Larimer F."/>
            <person name="Copeland A."/>
            <person name="Detter J.C."/>
            <person name="Land M."/>
            <person name="Richardson P.M."/>
            <person name="Yu X.J."/>
            <person name="Walker D.H."/>
            <person name="McBride J.W."/>
            <person name="Kyrpides N.C."/>
        </authorList>
    </citation>
    <scope>NUCLEOTIDE SEQUENCE [LARGE SCALE GENOMIC DNA]</scope>
    <source>
        <strain>Jake</strain>
    </source>
</reference>